<comment type="function">
    <text evidence="1">The glycine cleavage system catalyzes the degradation of glycine. The H protein shuttles the methylamine group of glycine from the P protein to the T protein.</text>
</comment>
<comment type="function">
    <text evidence="1 3">Is also involved in protein lipoylation via its role as an octanoyl/lipoyl carrier protein intermediate.</text>
</comment>
<comment type="cofactor">
    <cofactor evidence="1">
        <name>(R)-lipoate</name>
        <dbReference type="ChEBI" id="CHEBI:83088"/>
    </cofactor>
    <text evidence="1">Binds 1 lipoyl cofactor covalently.</text>
</comment>
<comment type="subunit">
    <text evidence="1">The glycine cleavage system is composed of four proteins: P, T, L and H.</text>
</comment>
<comment type="disruption phenotype">
    <text evidence="3">Strains are lipoate auxotrophs. The requirement for lipoic acid can be bypassed by addition of both acetate and branched-chain fatty acid (BCFA) precursors.</text>
</comment>
<comment type="similarity">
    <text evidence="1">Belongs to the GcvH family.</text>
</comment>
<keyword id="KW-0450">Lipoyl</keyword>
<keyword id="KW-1185">Reference proteome</keyword>
<accession>O32174</accession>
<sequence>MSIPKDLRYSGEHEWVKVEGEKARIGITHFAQSELGDIVFVELPEVGAEIKADEPFGSVESVKTVSELYAPINGTVVEVNEDLDDSPEFVNESPYEKAWMIVVEPSDASEIEKLMTAEQYEEMTQED</sequence>
<name>GCSH_BACSU</name>
<gene>
    <name evidence="1" type="primary">gcvH</name>
    <name type="synonym">yusH</name>
    <name type="ordered locus">BSU32800</name>
</gene>
<evidence type="ECO:0000255" key="1">
    <source>
        <dbReference type="HAMAP-Rule" id="MF_00272"/>
    </source>
</evidence>
<evidence type="ECO:0000255" key="2">
    <source>
        <dbReference type="PROSITE-ProRule" id="PRU01066"/>
    </source>
</evidence>
<evidence type="ECO:0000269" key="3">
    <source>
    </source>
</evidence>
<organism>
    <name type="scientific">Bacillus subtilis (strain 168)</name>
    <dbReference type="NCBI Taxonomy" id="224308"/>
    <lineage>
        <taxon>Bacteria</taxon>
        <taxon>Bacillati</taxon>
        <taxon>Bacillota</taxon>
        <taxon>Bacilli</taxon>
        <taxon>Bacillales</taxon>
        <taxon>Bacillaceae</taxon>
        <taxon>Bacillus</taxon>
    </lineage>
</organism>
<proteinExistence type="evidence at protein level"/>
<dbReference type="EMBL" id="AL009126">
    <property type="protein sequence ID" value="CAB15269.1"/>
    <property type="molecule type" value="Genomic_DNA"/>
</dbReference>
<dbReference type="PIR" id="A70021">
    <property type="entry name" value="A70021"/>
</dbReference>
<dbReference type="RefSeq" id="NP_391159.1">
    <property type="nucleotide sequence ID" value="NC_000964.3"/>
</dbReference>
<dbReference type="RefSeq" id="WP_003222781.1">
    <property type="nucleotide sequence ID" value="NZ_OZ025638.1"/>
</dbReference>
<dbReference type="SMR" id="O32174"/>
<dbReference type="FunCoup" id="O32174">
    <property type="interactions" value="659"/>
</dbReference>
<dbReference type="STRING" id="224308.BSU32800"/>
<dbReference type="jPOST" id="O32174"/>
<dbReference type="PaxDb" id="224308-BSU32800"/>
<dbReference type="EnsemblBacteria" id="CAB15269">
    <property type="protein sequence ID" value="CAB15269"/>
    <property type="gene ID" value="BSU_32800"/>
</dbReference>
<dbReference type="GeneID" id="76979760"/>
<dbReference type="GeneID" id="936724"/>
<dbReference type="KEGG" id="bsu:BSU32800"/>
<dbReference type="PATRIC" id="fig|224308.179.peg.3554"/>
<dbReference type="eggNOG" id="COG0509">
    <property type="taxonomic scope" value="Bacteria"/>
</dbReference>
<dbReference type="InParanoid" id="O32174"/>
<dbReference type="OrthoDB" id="9796712at2"/>
<dbReference type="PhylomeDB" id="O32174"/>
<dbReference type="BioCyc" id="BSUB:BSU32800-MONOMER"/>
<dbReference type="PRO" id="PR:O32174"/>
<dbReference type="Proteomes" id="UP000001570">
    <property type="component" value="Chromosome"/>
</dbReference>
<dbReference type="GO" id="GO:0005829">
    <property type="term" value="C:cytosol"/>
    <property type="evidence" value="ECO:0000318"/>
    <property type="project" value="GO_Central"/>
</dbReference>
<dbReference type="GO" id="GO:0005960">
    <property type="term" value="C:glycine cleavage complex"/>
    <property type="evidence" value="ECO:0007669"/>
    <property type="project" value="InterPro"/>
</dbReference>
<dbReference type="GO" id="GO:0019464">
    <property type="term" value="P:glycine decarboxylation via glycine cleavage system"/>
    <property type="evidence" value="ECO:0007669"/>
    <property type="project" value="UniProtKB-UniRule"/>
</dbReference>
<dbReference type="GO" id="GO:0009107">
    <property type="term" value="P:lipoate biosynthetic process"/>
    <property type="evidence" value="ECO:0000315"/>
    <property type="project" value="UniProtKB"/>
</dbReference>
<dbReference type="GO" id="GO:0009249">
    <property type="term" value="P:protein lipoylation"/>
    <property type="evidence" value="ECO:0000315"/>
    <property type="project" value="UniProtKB"/>
</dbReference>
<dbReference type="CDD" id="cd06848">
    <property type="entry name" value="GCS_H"/>
    <property type="match status" value="1"/>
</dbReference>
<dbReference type="FunFam" id="2.40.50.100:FF:000011">
    <property type="entry name" value="Glycine cleavage system H protein"/>
    <property type="match status" value="1"/>
</dbReference>
<dbReference type="Gene3D" id="2.40.50.100">
    <property type="match status" value="1"/>
</dbReference>
<dbReference type="HAMAP" id="MF_00272">
    <property type="entry name" value="GcvH"/>
    <property type="match status" value="1"/>
</dbReference>
<dbReference type="InterPro" id="IPR003016">
    <property type="entry name" value="2-oxoA_DH_lipoyl-BS"/>
</dbReference>
<dbReference type="InterPro" id="IPR000089">
    <property type="entry name" value="Biotin_lipoyl"/>
</dbReference>
<dbReference type="InterPro" id="IPR002930">
    <property type="entry name" value="GCV_H"/>
</dbReference>
<dbReference type="InterPro" id="IPR033753">
    <property type="entry name" value="GCV_H/Fam206"/>
</dbReference>
<dbReference type="InterPro" id="IPR017453">
    <property type="entry name" value="GCV_H_sub"/>
</dbReference>
<dbReference type="InterPro" id="IPR011053">
    <property type="entry name" value="Single_hybrid_motif"/>
</dbReference>
<dbReference type="NCBIfam" id="TIGR00527">
    <property type="entry name" value="gcvH"/>
    <property type="match status" value="1"/>
</dbReference>
<dbReference type="NCBIfam" id="NF002270">
    <property type="entry name" value="PRK01202.1"/>
    <property type="match status" value="1"/>
</dbReference>
<dbReference type="PANTHER" id="PTHR11715">
    <property type="entry name" value="GLYCINE CLEAVAGE SYSTEM H PROTEIN"/>
    <property type="match status" value="1"/>
</dbReference>
<dbReference type="PANTHER" id="PTHR11715:SF3">
    <property type="entry name" value="GLYCINE CLEAVAGE SYSTEM H PROTEIN-RELATED"/>
    <property type="match status" value="1"/>
</dbReference>
<dbReference type="Pfam" id="PF01597">
    <property type="entry name" value="GCV_H"/>
    <property type="match status" value="1"/>
</dbReference>
<dbReference type="SUPFAM" id="SSF51230">
    <property type="entry name" value="Single hybrid motif"/>
    <property type="match status" value="1"/>
</dbReference>
<dbReference type="PROSITE" id="PS50968">
    <property type="entry name" value="BIOTINYL_LIPOYL"/>
    <property type="match status" value="1"/>
</dbReference>
<dbReference type="PROSITE" id="PS00189">
    <property type="entry name" value="LIPOYL"/>
    <property type="match status" value="1"/>
</dbReference>
<protein>
    <recommendedName>
        <fullName evidence="1">Glycine cleavage system H protein</fullName>
    </recommendedName>
    <alternativeName>
        <fullName evidence="1">Octanoyl/lipoyl carrier protein</fullName>
    </alternativeName>
</protein>
<reference key="1">
    <citation type="journal article" date="1997" name="Nature">
        <title>The complete genome sequence of the Gram-positive bacterium Bacillus subtilis.</title>
        <authorList>
            <person name="Kunst F."/>
            <person name="Ogasawara N."/>
            <person name="Moszer I."/>
            <person name="Albertini A.M."/>
            <person name="Alloni G."/>
            <person name="Azevedo V."/>
            <person name="Bertero M.G."/>
            <person name="Bessieres P."/>
            <person name="Bolotin A."/>
            <person name="Borchert S."/>
            <person name="Borriss R."/>
            <person name="Boursier L."/>
            <person name="Brans A."/>
            <person name="Braun M."/>
            <person name="Brignell S.C."/>
            <person name="Bron S."/>
            <person name="Brouillet S."/>
            <person name="Bruschi C.V."/>
            <person name="Caldwell B."/>
            <person name="Capuano V."/>
            <person name="Carter N.M."/>
            <person name="Choi S.-K."/>
            <person name="Codani J.-J."/>
            <person name="Connerton I.F."/>
            <person name="Cummings N.J."/>
            <person name="Daniel R.A."/>
            <person name="Denizot F."/>
            <person name="Devine K.M."/>
            <person name="Duesterhoeft A."/>
            <person name="Ehrlich S.D."/>
            <person name="Emmerson P.T."/>
            <person name="Entian K.-D."/>
            <person name="Errington J."/>
            <person name="Fabret C."/>
            <person name="Ferrari E."/>
            <person name="Foulger D."/>
            <person name="Fritz C."/>
            <person name="Fujita M."/>
            <person name="Fujita Y."/>
            <person name="Fuma S."/>
            <person name="Galizzi A."/>
            <person name="Galleron N."/>
            <person name="Ghim S.-Y."/>
            <person name="Glaser P."/>
            <person name="Goffeau A."/>
            <person name="Golightly E.J."/>
            <person name="Grandi G."/>
            <person name="Guiseppi G."/>
            <person name="Guy B.J."/>
            <person name="Haga K."/>
            <person name="Haiech J."/>
            <person name="Harwood C.R."/>
            <person name="Henaut A."/>
            <person name="Hilbert H."/>
            <person name="Holsappel S."/>
            <person name="Hosono S."/>
            <person name="Hullo M.-F."/>
            <person name="Itaya M."/>
            <person name="Jones L.-M."/>
            <person name="Joris B."/>
            <person name="Karamata D."/>
            <person name="Kasahara Y."/>
            <person name="Klaerr-Blanchard M."/>
            <person name="Klein C."/>
            <person name="Kobayashi Y."/>
            <person name="Koetter P."/>
            <person name="Koningstein G."/>
            <person name="Krogh S."/>
            <person name="Kumano M."/>
            <person name="Kurita K."/>
            <person name="Lapidus A."/>
            <person name="Lardinois S."/>
            <person name="Lauber J."/>
            <person name="Lazarevic V."/>
            <person name="Lee S.-M."/>
            <person name="Levine A."/>
            <person name="Liu H."/>
            <person name="Masuda S."/>
            <person name="Mauel C."/>
            <person name="Medigue C."/>
            <person name="Medina N."/>
            <person name="Mellado R.P."/>
            <person name="Mizuno M."/>
            <person name="Moestl D."/>
            <person name="Nakai S."/>
            <person name="Noback M."/>
            <person name="Noone D."/>
            <person name="O'Reilly M."/>
            <person name="Ogawa K."/>
            <person name="Ogiwara A."/>
            <person name="Oudega B."/>
            <person name="Park S.-H."/>
            <person name="Parro V."/>
            <person name="Pohl T.M."/>
            <person name="Portetelle D."/>
            <person name="Porwollik S."/>
            <person name="Prescott A.M."/>
            <person name="Presecan E."/>
            <person name="Pujic P."/>
            <person name="Purnelle B."/>
            <person name="Rapoport G."/>
            <person name="Rey M."/>
            <person name="Reynolds S."/>
            <person name="Rieger M."/>
            <person name="Rivolta C."/>
            <person name="Rocha E."/>
            <person name="Roche B."/>
            <person name="Rose M."/>
            <person name="Sadaie Y."/>
            <person name="Sato T."/>
            <person name="Scanlan E."/>
            <person name="Schleich S."/>
            <person name="Schroeter R."/>
            <person name="Scoffone F."/>
            <person name="Sekiguchi J."/>
            <person name="Sekowska A."/>
            <person name="Seror S.J."/>
            <person name="Serror P."/>
            <person name="Shin B.-S."/>
            <person name="Soldo B."/>
            <person name="Sorokin A."/>
            <person name="Tacconi E."/>
            <person name="Takagi T."/>
            <person name="Takahashi H."/>
            <person name="Takemaru K."/>
            <person name="Takeuchi M."/>
            <person name="Tamakoshi A."/>
            <person name="Tanaka T."/>
            <person name="Terpstra P."/>
            <person name="Tognoni A."/>
            <person name="Tosato V."/>
            <person name="Uchiyama S."/>
            <person name="Vandenbol M."/>
            <person name="Vannier F."/>
            <person name="Vassarotti A."/>
            <person name="Viari A."/>
            <person name="Wambutt R."/>
            <person name="Wedler E."/>
            <person name="Wedler H."/>
            <person name="Weitzenegger T."/>
            <person name="Winters P."/>
            <person name="Wipat A."/>
            <person name="Yamamoto H."/>
            <person name="Yamane K."/>
            <person name="Yasumoto K."/>
            <person name="Yata K."/>
            <person name="Yoshida K."/>
            <person name="Yoshikawa H.-F."/>
            <person name="Zumstein E."/>
            <person name="Yoshikawa H."/>
            <person name="Danchin A."/>
        </authorList>
    </citation>
    <scope>NUCLEOTIDE SEQUENCE [LARGE SCALE GENOMIC DNA]</scope>
    <source>
        <strain>168</strain>
    </source>
</reference>
<reference key="2">
    <citation type="journal article" date="2011" name="Mol. Microbiol.">
        <title>A novel amidotransferase required for lipoic acid cofactor assembly in Bacillus subtilis.</title>
        <authorList>
            <person name="Christensen Q.H."/>
            <person name="Martin N."/>
            <person name="Mansilla M.C."/>
            <person name="de Mendoza D."/>
            <person name="Cronan J.E."/>
        </authorList>
    </citation>
    <scope>FUNCTION AS A LIPOYL CARRIER</scope>
    <scope>ROLE IN PROTEIN LIPOYLATION</scope>
    <scope>DISRUPTION PHENOTYPE</scope>
    <source>
        <strain>168 / JH642</strain>
    </source>
</reference>
<feature type="chain" id="PRO_0000166205" description="Glycine cleavage system H protein">
    <location>
        <begin position="1"/>
        <end position="127"/>
    </location>
</feature>
<feature type="domain" description="Lipoyl-binding" evidence="2">
    <location>
        <begin position="22"/>
        <end position="104"/>
    </location>
</feature>
<feature type="modified residue" description="N6-lipoyllysine" evidence="1">
    <location>
        <position position="63"/>
    </location>
</feature>